<organism>
    <name type="scientific">Arabidopsis thaliana</name>
    <name type="common">Mouse-ear cress</name>
    <dbReference type="NCBI Taxonomy" id="3702"/>
    <lineage>
        <taxon>Eukaryota</taxon>
        <taxon>Viridiplantae</taxon>
        <taxon>Streptophyta</taxon>
        <taxon>Embryophyta</taxon>
        <taxon>Tracheophyta</taxon>
        <taxon>Spermatophyta</taxon>
        <taxon>Magnoliopsida</taxon>
        <taxon>eudicotyledons</taxon>
        <taxon>Gunneridae</taxon>
        <taxon>Pentapetalae</taxon>
        <taxon>rosids</taxon>
        <taxon>malvids</taxon>
        <taxon>Brassicales</taxon>
        <taxon>Brassicaceae</taxon>
        <taxon>Camelineae</taxon>
        <taxon>Arabidopsis</taxon>
    </lineage>
</organism>
<comment type="subcellular location">
    <subcellularLocation>
        <location evidence="1">Nucleus</location>
    </subcellularLocation>
</comment>
<comment type="alternative products">
    <event type="alternative splicing"/>
    <isoform>
        <id>Q9FNI3-1</id>
        <name>1</name>
        <sequence type="displayed"/>
    </isoform>
    <isoform>
        <id>Q9FNI3-2</id>
        <name>2</name>
        <sequence type="described" ref="VSP_037336"/>
    </isoform>
</comment>
<comment type="miscellaneous">
    <molecule>Isoform 2</molecule>
    <text evidence="2">May be due to a competing donor splice site.</text>
</comment>
<keyword id="KW-0025">Alternative splicing</keyword>
<keyword id="KW-0238">DNA-binding</keyword>
<keyword id="KW-0539">Nucleus</keyword>
<keyword id="KW-1185">Reference proteome</keyword>
<keyword id="KW-0804">Transcription</keyword>
<keyword id="KW-0805">Transcription regulation</keyword>
<accession>Q9FNI3</accession>
<accession>B3H5L5</accession>
<proteinExistence type="inferred from homology"/>
<reference key="1">
    <citation type="journal article" date="1997" name="DNA Res.">
        <title>Structural analysis of Arabidopsis thaliana chromosome 5. II. Sequence features of the regions of 1,044,062 bp covered by thirteen physically assigned P1 clones.</title>
        <authorList>
            <person name="Kotani H."/>
            <person name="Nakamura Y."/>
            <person name="Sato S."/>
            <person name="Kaneko T."/>
            <person name="Asamizu E."/>
            <person name="Miyajima N."/>
            <person name="Tabata S."/>
        </authorList>
    </citation>
    <scope>NUCLEOTIDE SEQUENCE [LARGE SCALE GENOMIC DNA]</scope>
    <source>
        <strain>cv. Columbia</strain>
    </source>
</reference>
<reference key="2">
    <citation type="journal article" date="2017" name="Plant J.">
        <title>Araport11: a complete reannotation of the Arabidopsis thaliana reference genome.</title>
        <authorList>
            <person name="Cheng C.Y."/>
            <person name="Krishnakumar V."/>
            <person name="Chan A.P."/>
            <person name="Thibaud-Nissen F."/>
            <person name="Schobel S."/>
            <person name="Town C.D."/>
        </authorList>
    </citation>
    <scope>GENOME REANNOTATION</scope>
    <source>
        <strain>cv. Columbia</strain>
    </source>
</reference>
<reference key="3">
    <citation type="journal article" date="2008" name="Trends Plant Sci.">
        <title>The plant B3 superfamily.</title>
        <authorList>
            <person name="Swaminathan K."/>
            <person name="Peterson K."/>
            <person name="Jack T."/>
        </authorList>
    </citation>
    <scope>GENE FAMILY</scope>
</reference>
<gene>
    <name type="ordered locus">At5g06250</name>
    <name type="ORF">MHF15.23</name>
</gene>
<sequence>MSVNHYSTDHHHTLLWQQQQHRHTTDTSETTTTATWLHDDLKESLFEKSLTPSDVGKLNRLVIPKQHAEKYFPLNAVLVSSAAADTSSSEKGMLLSFEDESGKSWRFRYSYWNSSQSYVLTKGWSRFVKDKQLDPGDVVFFQRHRSDSRRLFIGWRRRGQGSSSSVAATNSAVNTSSMGALSYHQIHATSNYSNPPSHSEYSHYGAAVATAAETHSTPSSSVVGSSRTVRLFGVNLECQMDENDGDDSVAVATTVESPDGYYGQNMYYYYSHPHNMVILTLL</sequence>
<feature type="chain" id="PRO_0000375158" description="B3 domain-containing protein At5g06250">
    <location>
        <begin position="1"/>
        <end position="282"/>
    </location>
</feature>
<feature type="DNA-binding region" description="TF-B3" evidence="1">
    <location>
        <begin position="46"/>
        <end position="159"/>
    </location>
</feature>
<feature type="splice variant" id="VSP_037336" description="In isoform 2." evidence="2">
    <original>SNYSNPPSHSEYSHYG</original>
    <variation>R</variation>
    <location>
        <begin position="190"/>
        <end position="205"/>
    </location>
</feature>
<name>Y5625_ARATH</name>
<protein>
    <recommendedName>
        <fullName>B3 domain-containing protein At5g06250</fullName>
    </recommendedName>
</protein>
<evidence type="ECO:0000255" key="1">
    <source>
        <dbReference type="PROSITE-ProRule" id="PRU00326"/>
    </source>
</evidence>
<evidence type="ECO:0000305" key="2"/>
<dbReference type="EMBL" id="AB006700">
    <property type="protein sequence ID" value="BAB08947.1"/>
    <property type="molecule type" value="Genomic_DNA"/>
</dbReference>
<dbReference type="EMBL" id="CP002688">
    <property type="protein sequence ID" value="AED90990.1"/>
    <property type="molecule type" value="Genomic_DNA"/>
</dbReference>
<dbReference type="EMBL" id="CP002688">
    <property type="protein sequence ID" value="AED90991.1"/>
    <property type="molecule type" value="Genomic_DNA"/>
</dbReference>
<dbReference type="RefSeq" id="NP_001119177.1">
    <molecule id="Q9FNI3-1"/>
    <property type="nucleotide sequence ID" value="NM_001125705.2"/>
</dbReference>
<dbReference type="RefSeq" id="NP_196243.2">
    <molecule id="Q9FNI3-2"/>
    <property type="nucleotide sequence ID" value="NM_120707.2"/>
</dbReference>
<dbReference type="SMR" id="Q9FNI3"/>
<dbReference type="BioGRID" id="15791">
    <property type="interactions" value="2"/>
</dbReference>
<dbReference type="FunCoup" id="Q9FNI3">
    <property type="interactions" value="56"/>
</dbReference>
<dbReference type="IntAct" id="Q9FNI3">
    <property type="interactions" value="1"/>
</dbReference>
<dbReference type="STRING" id="3702.Q9FNI3"/>
<dbReference type="PaxDb" id="3702-AT5G06250.2"/>
<dbReference type="EnsemblPlants" id="AT5G06250.1">
    <molecule id="Q9FNI3-2"/>
    <property type="protein sequence ID" value="AT5G06250.1"/>
    <property type="gene ID" value="AT5G06250"/>
</dbReference>
<dbReference type="EnsemblPlants" id="AT5G06250.2">
    <molecule id="Q9FNI3-1"/>
    <property type="protein sequence ID" value="AT5G06250.2"/>
    <property type="gene ID" value="AT5G06250"/>
</dbReference>
<dbReference type="GeneID" id="830512"/>
<dbReference type="Gramene" id="AT5G06250.1">
    <molecule id="Q9FNI3-2"/>
    <property type="protein sequence ID" value="AT5G06250.1"/>
    <property type="gene ID" value="AT5G06250"/>
</dbReference>
<dbReference type="Gramene" id="AT5G06250.2">
    <molecule id="Q9FNI3-1"/>
    <property type="protein sequence ID" value="AT5G06250.2"/>
    <property type="gene ID" value="AT5G06250"/>
</dbReference>
<dbReference type="KEGG" id="ath:AT5G06250"/>
<dbReference type="Araport" id="AT5G06250"/>
<dbReference type="TAIR" id="AT5G06250">
    <property type="gene designation" value="DPA4"/>
</dbReference>
<dbReference type="eggNOG" id="ENOG502R9U7">
    <property type="taxonomic scope" value="Eukaryota"/>
</dbReference>
<dbReference type="InParanoid" id="Q9FNI3"/>
<dbReference type="PhylomeDB" id="Q9FNI3"/>
<dbReference type="PRO" id="PR:Q9FNI3"/>
<dbReference type="Proteomes" id="UP000006548">
    <property type="component" value="Chromosome 5"/>
</dbReference>
<dbReference type="ExpressionAtlas" id="Q9FNI3">
    <property type="expression patterns" value="baseline and differential"/>
</dbReference>
<dbReference type="GO" id="GO:0005634">
    <property type="term" value="C:nucleus"/>
    <property type="evidence" value="ECO:0007669"/>
    <property type="project" value="UniProtKB-SubCell"/>
</dbReference>
<dbReference type="GO" id="GO:0003677">
    <property type="term" value="F:DNA binding"/>
    <property type="evidence" value="ECO:0007669"/>
    <property type="project" value="UniProtKB-KW"/>
</dbReference>
<dbReference type="GO" id="GO:0003700">
    <property type="term" value="F:DNA-binding transcription factor activity"/>
    <property type="evidence" value="ECO:0000250"/>
    <property type="project" value="TAIR"/>
</dbReference>
<dbReference type="GO" id="GO:0048366">
    <property type="term" value="P:leaf development"/>
    <property type="evidence" value="ECO:0000316"/>
    <property type="project" value="TAIR"/>
</dbReference>
<dbReference type="GO" id="GO:0010358">
    <property type="term" value="P:leaf shaping"/>
    <property type="evidence" value="ECO:0000316"/>
    <property type="project" value="TAIR"/>
</dbReference>
<dbReference type="GO" id="GO:0010073">
    <property type="term" value="P:meristem maintenance"/>
    <property type="evidence" value="ECO:0000315"/>
    <property type="project" value="TAIR"/>
</dbReference>
<dbReference type="GO" id="GO:0045892">
    <property type="term" value="P:negative regulation of DNA-templated transcription"/>
    <property type="evidence" value="ECO:0000315"/>
    <property type="project" value="TAIR"/>
</dbReference>
<dbReference type="GO" id="GO:0006355">
    <property type="term" value="P:regulation of DNA-templated transcription"/>
    <property type="evidence" value="ECO:0000304"/>
    <property type="project" value="TAIR"/>
</dbReference>
<dbReference type="CDD" id="cd10017">
    <property type="entry name" value="B3_DNA"/>
    <property type="match status" value="1"/>
</dbReference>
<dbReference type="FunFam" id="2.40.330.10:FF:000002">
    <property type="entry name" value="B3 domain-containing protein"/>
    <property type="match status" value="1"/>
</dbReference>
<dbReference type="Gene3D" id="2.40.330.10">
    <property type="entry name" value="DNA-binding pseudobarrel domain"/>
    <property type="match status" value="1"/>
</dbReference>
<dbReference type="InterPro" id="IPR003340">
    <property type="entry name" value="B3_DNA-bd"/>
</dbReference>
<dbReference type="InterPro" id="IPR015300">
    <property type="entry name" value="DNA-bd_pseudobarrel_sf"/>
</dbReference>
<dbReference type="InterPro" id="IPR044800">
    <property type="entry name" value="LEC2-like"/>
</dbReference>
<dbReference type="PANTHER" id="PTHR31140">
    <property type="entry name" value="B3 DOMAIN-CONTAINING TRANSCRIPTION FACTOR ABI3"/>
    <property type="match status" value="1"/>
</dbReference>
<dbReference type="PANTHER" id="PTHR31140:SF45">
    <property type="entry name" value="TF-B3 DOMAIN-CONTAINING PROTEIN"/>
    <property type="match status" value="1"/>
</dbReference>
<dbReference type="Pfam" id="PF02362">
    <property type="entry name" value="B3"/>
    <property type="match status" value="1"/>
</dbReference>
<dbReference type="SMART" id="SM01019">
    <property type="entry name" value="B3"/>
    <property type="match status" value="1"/>
</dbReference>
<dbReference type="SUPFAM" id="SSF101936">
    <property type="entry name" value="DNA-binding pseudobarrel domain"/>
    <property type="match status" value="1"/>
</dbReference>
<dbReference type="PROSITE" id="PS50863">
    <property type="entry name" value="B3"/>
    <property type="match status" value="1"/>
</dbReference>